<comment type="function">
    <text evidence="1">Required for rescue of stalled ribosomes mediated by trans-translation. Binds to transfer-messenger RNA (tmRNA), required for stable association of tmRNA with ribosomes. tmRNA and SmpB together mimic tRNA shape, replacing the anticodon stem-loop with SmpB. tmRNA is encoded by the ssrA gene; the 2 termini fold to resemble tRNA(Ala) and it encodes a 'tag peptide', a short internal open reading frame. During trans-translation Ala-aminoacylated tmRNA acts like a tRNA, entering the A-site of stalled ribosomes, displacing the stalled mRNA. The ribosome then switches to translate the ORF on the tmRNA; the nascent peptide is terminated with the 'tag peptide' encoded by the tmRNA and targeted for degradation. The ribosome is freed to recommence translation, which seems to be the essential function of trans-translation.</text>
</comment>
<comment type="subcellular location">
    <subcellularLocation>
        <location evidence="1">Cytoplasm</location>
    </subcellularLocation>
    <text evidence="1">The tmRNA-SmpB complex associates with stalled 70S ribosomes.</text>
</comment>
<comment type="similarity">
    <text evidence="1">Belongs to the SmpB family.</text>
</comment>
<evidence type="ECO:0000255" key="1">
    <source>
        <dbReference type="HAMAP-Rule" id="MF_00023"/>
    </source>
</evidence>
<evidence type="ECO:0000256" key="2">
    <source>
        <dbReference type="SAM" id="MobiDB-lite"/>
    </source>
</evidence>
<evidence type="ECO:0000305" key="3"/>
<keyword id="KW-0963">Cytoplasm</keyword>
<keyword id="KW-1185">Reference proteome</keyword>
<keyword id="KW-0694">RNA-binding</keyword>
<reference key="1">
    <citation type="journal article" date="1995" name="Microb. Pathog.">
        <title>Cloning and molecular analysis of the Isi1 (rfaF) gene of Neisseria meningitidis which encodes a heptosyl-2-transferase involved in LPS biosynthesis: evaluation of surface exposed carbohydrates in LPS mediated toxicity for human endothelial cells.</title>
        <authorList>
            <person name="Jennings M.P."/>
            <person name="Bisercic M."/>
            <person name="Dunn K.L.R."/>
            <person name="Martin A."/>
            <person name="Wilkes K.E."/>
            <person name="Virji M."/>
            <person name="Richards J.C."/>
            <person name="Moxon E.R."/>
        </authorList>
    </citation>
    <scope>NUCLEOTIDE SEQUENCE [GENOMIC DNA]</scope>
    <source>
        <strain>ATCC BAA-335 / MC58</strain>
    </source>
</reference>
<reference key="2">
    <citation type="journal article" date="2000" name="Science">
        <title>Complete genome sequence of Neisseria meningitidis serogroup B strain MC58.</title>
        <authorList>
            <person name="Tettelin H."/>
            <person name="Saunders N.J."/>
            <person name="Heidelberg J.F."/>
            <person name="Jeffries A.C."/>
            <person name="Nelson K.E."/>
            <person name="Eisen J.A."/>
            <person name="Ketchum K.A."/>
            <person name="Hood D.W."/>
            <person name="Peden J.F."/>
            <person name="Dodson R.J."/>
            <person name="Nelson W.C."/>
            <person name="Gwinn M.L."/>
            <person name="DeBoy R.T."/>
            <person name="Peterson J.D."/>
            <person name="Hickey E.K."/>
            <person name="Haft D.H."/>
            <person name="Salzberg S.L."/>
            <person name="White O."/>
            <person name="Fleischmann R.D."/>
            <person name="Dougherty B.A."/>
            <person name="Mason T.M."/>
            <person name="Ciecko A."/>
            <person name="Parksey D.S."/>
            <person name="Blair E."/>
            <person name="Cittone H."/>
            <person name="Clark E.B."/>
            <person name="Cotton M.D."/>
            <person name="Utterback T.R."/>
            <person name="Khouri H.M."/>
            <person name="Qin H."/>
            <person name="Vamathevan J.J."/>
            <person name="Gill J."/>
            <person name="Scarlato V."/>
            <person name="Masignani V."/>
            <person name="Pizza M."/>
            <person name="Grandi G."/>
            <person name="Sun L."/>
            <person name="Smith H.O."/>
            <person name="Fraser C.M."/>
            <person name="Moxon E.R."/>
            <person name="Rappuoli R."/>
            <person name="Venter J.C."/>
        </authorList>
    </citation>
    <scope>NUCLEOTIDE SEQUENCE [LARGE SCALE GENOMIC DNA]</scope>
    <source>
        <strain>ATCC BAA-335 / MC58</strain>
    </source>
</reference>
<protein>
    <recommendedName>
        <fullName evidence="1">SsrA-binding protein</fullName>
    </recommendedName>
    <alternativeName>
        <fullName evidence="1">Small protein B</fullName>
    </alternativeName>
</protein>
<gene>
    <name evidence="1" type="primary">smpB</name>
    <name type="ordered locus">NMB1526</name>
</gene>
<accession>P0A0Y8</accession>
<accession>Q51111</accession>
<dbReference type="EMBL" id="U23782">
    <property type="protein sequence ID" value="AAC44080.1"/>
    <property type="molecule type" value="Genomic_DNA"/>
</dbReference>
<dbReference type="EMBL" id="AE002098">
    <property type="protein sequence ID" value="AAF41881.1"/>
    <property type="molecule type" value="Genomic_DNA"/>
</dbReference>
<dbReference type="PIR" id="B81073">
    <property type="entry name" value="B81073"/>
</dbReference>
<dbReference type="RefSeq" id="NP_274533.1">
    <property type="nucleotide sequence ID" value="NC_003112.2"/>
</dbReference>
<dbReference type="RefSeq" id="WP_002229688.1">
    <property type="nucleotide sequence ID" value="NC_003112.2"/>
</dbReference>
<dbReference type="SMR" id="P0A0Y8"/>
<dbReference type="FunCoup" id="P0A0Y8">
    <property type="interactions" value="432"/>
</dbReference>
<dbReference type="STRING" id="122586.NMB1526"/>
<dbReference type="PaxDb" id="122586-NMB1526"/>
<dbReference type="GeneID" id="93387853"/>
<dbReference type="KEGG" id="nme:NMB1526"/>
<dbReference type="PATRIC" id="fig|122586.8.peg.1935"/>
<dbReference type="HOGENOM" id="CLU_108953_3_0_4"/>
<dbReference type="InParanoid" id="P0A0Y8"/>
<dbReference type="OrthoDB" id="9805462at2"/>
<dbReference type="Proteomes" id="UP000000425">
    <property type="component" value="Chromosome"/>
</dbReference>
<dbReference type="GO" id="GO:0005829">
    <property type="term" value="C:cytosol"/>
    <property type="evidence" value="ECO:0000318"/>
    <property type="project" value="GO_Central"/>
</dbReference>
<dbReference type="GO" id="GO:0003723">
    <property type="term" value="F:RNA binding"/>
    <property type="evidence" value="ECO:0000318"/>
    <property type="project" value="GO_Central"/>
</dbReference>
<dbReference type="GO" id="GO:0070929">
    <property type="term" value="P:trans-translation"/>
    <property type="evidence" value="ECO:0007669"/>
    <property type="project" value="UniProtKB-UniRule"/>
</dbReference>
<dbReference type="CDD" id="cd09294">
    <property type="entry name" value="SmpB"/>
    <property type="match status" value="1"/>
</dbReference>
<dbReference type="Gene3D" id="2.40.280.10">
    <property type="match status" value="1"/>
</dbReference>
<dbReference type="HAMAP" id="MF_00023">
    <property type="entry name" value="SmpB"/>
    <property type="match status" value="1"/>
</dbReference>
<dbReference type="InterPro" id="IPR023620">
    <property type="entry name" value="SmpB"/>
</dbReference>
<dbReference type="InterPro" id="IPR000037">
    <property type="entry name" value="SsrA-bd_prot"/>
</dbReference>
<dbReference type="InterPro" id="IPR020081">
    <property type="entry name" value="SsrA-bd_prot_CS"/>
</dbReference>
<dbReference type="NCBIfam" id="NF003843">
    <property type="entry name" value="PRK05422.1"/>
    <property type="match status" value="1"/>
</dbReference>
<dbReference type="NCBIfam" id="TIGR00086">
    <property type="entry name" value="smpB"/>
    <property type="match status" value="1"/>
</dbReference>
<dbReference type="PANTHER" id="PTHR30308:SF2">
    <property type="entry name" value="SSRA-BINDING PROTEIN"/>
    <property type="match status" value="1"/>
</dbReference>
<dbReference type="PANTHER" id="PTHR30308">
    <property type="entry name" value="TMRNA-BINDING COMPONENT OF TRANS-TRANSLATION TAGGING COMPLEX"/>
    <property type="match status" value="1"/>
</dbReference>
<dbReference type="Pfam" id="PF01668">
    <property type="entry name" value="SmpB"/>
    <property type="match status" value="1"/>
</dbReference>
<dbReference type="SUPFAM" id="SSF74982">
    <property type="entry name" value="Small protein B (SmpB)"/>
    <property type="match status" value="1"/>
</dbReference>
<dbReference type="PROSITE" id="PS01317">
    <property type="entry name" value="SSRP"/>
    <property type="match status" value="1"/>
</dbReference>
<name>SSRP_NEIMB</name>
<feature type="chain" id="PRO_0000102994" description="SsrA-binding protein">
    <location>
        <begin position="1"/>
        <end position="148"/>
    </location>
</feature>
<feature type="region of interest" description="Disordered" evidence="2">
    <location>
        <begin position="119"/>
        <end position="148"/>
    </location>
</feature>
<feature type="compositionally biased region" description="Basic and acidic residues" evidence="2">
    <location>
        <begin position="127"/>
        <end position="142"/>
    </location>
</feature>
<feature type="sequence conflict" description="In Ref. 1; AAC44080." evidence="3" ref="1">
    <original>RVQ</original>
    <variation>LSM</variation>
    <location>
        <begin position="37"/>
        <end position="39"/>
    </location>
</feature>
<feature type="sequence conflict" description="In Ref. 1; AAC44080." evidence="3" ref="1">
    <original>I</original>
    <variation>M</variation>
    <location>
        <position position="45"/>
    </location>
</feature>
<feature type="sequence conflict" description="In Ref. 1; AAC44080." evidence="3" ref="1">
    <original>PRKL</original>
    <variation>RASF</variation>
    <location>
        <begin position="76"/>
        <end position="79"/>
    </location>
</feature>
<feature type="sequence conflict" description="In Ref. 1; AAC44080." evidence="3" ref="1">
    <original>I</original>
    <variation>N</variation>
    <location>
        <position position="90"/>
    </location>
</feature>
<feature type="sequence conflict" description="In Ref. 1; AAC44080." evidence="3" ref="1">
    <original>I</original>
    <variation>T</variation>
    <location>
        <position position="100"/>
    </location>
</feature>
<feature type="sequence conflict" description="In Ref. 1; AAC44080." evidence="3" ref="1">
    <original>DLH</original>
    <variation>GFA</variation>
    <location>
        <begin position="104"/>
        <end position="106"/>
    </location>
</feature>
<proteinExistence type="inferred from homology"/>
<sequence length="148" mass="17179">MAIANNKKAFHDFFIEDRIEAGLVLEGWEVKAIRAARVQLKESYIYWKKDAFYLVGCHITALPTASTHIKPDAVRPRKLLLNQSEINKLIGKTERAGYTIVPLDLHFSRGKIKMEIGLAKGKKQHDKRQSMKEADWKREKQRLIKHTR</sequence>
<organism>
    <name type="scientific">Neisseria meningitidis serogroup B (strain ATCC BAA-335 / MC58)</name>
    <dbReference type="NCBI Taxonomy" id="122586"/>
    <lineage>
        <taxon>Bacteria</taxon>
        <taxon>Pseudomonadati</taxon>
        <taxon>Pseudomonadota</taxon>
        <taxon>Betaproteobacteria</taxon>
        <taxon>Neisseriales</taxon>
        <taxon>Neisseriaceae</taxon>
        <taxon>Neisseria</taxon>
    </lineage>
</organism>